<keyword id="KW-1185">Reference proteome</keyword>
<dbReference type="EMBL" id="BA000016">
    <property type="protein sequence ID" value="BAB81108.1"/>
    <property type="molecule type" value="Genomic_DNA"/>
</dbReference>
<dbReference type="EMBL" id="X86493">
    <property type="protein sequence ID" value="CAA60215.1"/>
    <property type="molecule type" value="Genomic_DNA"/>
</dbReference>
<dbReference type="RefSeq" id="WP_011010428.1">
    <property type="nucleotide sequence ID" value="NC_003366.1"/>
</dbReference>
<dbReference type="SMR" id="Q46205"/>
<dbReference type="STRING" id="195102.gene:10490666"/>
<dbReference type="KEGG" id="cpe:CPE1402"/>
<dbReference type="HOGENOM" id="CLU_009165_1_0_9"/>
<dbReference type="Proteomes" id="UP000000818">
    <property type="component" value="Chromosome"/>
</dbReference>
<dbReference type="GO" id="GO:0046872">
    <property type="term" value="F:metal ion binding"/>
    <property type="evidence" value="ECO:0007669"/>
    <property type="project" value="InterPro"/>
</dbReference>
<dbReference type="GO" id="GO:0004222">
    <property type="term" value="F:metalloendopeptidase activity"/>
    <property type="evidence" value="ECO:0007669"/>
    <property type="project" value="TreeGrafter"/>
</dbReference>
<dbReference type="GO" id="GO:0016485">
    <property type="term" value="P:protein processing"/>
    <property type="evidence" value="ECO:0007669"/>
    <property type="project" value="TreeGrafter"/>
</dbReference>
<dbReference type="FunFam" id="3.30.830.10:FF:000034">
    <property type="entry name" value="presequence protease 1, chloroplastic/mitochondrial"/>
    <property type="match status" value="1"/>
</dbReference>
<dbReference type="Gene3D" id="3.30.830.10">
    <property type="entry name" value="Metalloenzyme, LuxS/M16 peptidase-like"/>
    <property type="match status" value="4"/>
</dbReference>
<dbReference type="InterPro" id="IPR011249">
    <property type="entry name" value="Metalloenz_LuxS/M16"/>
</dbReference>
<dbReference type="InterPro" id="IPR011765">
    <property type="entry name" value="Pept_M16_N"/>
</dbReference>
<dbReference type="InterPro" id="IPR007863">
    <property type="entry name" value="Peptidase_M16_C"/>
</dbReference>
<dbReference type="InterPro" id="IPR013578">
    <property type="entry name" value="Peptidase_M16C_assoc"/>
</dbReference>
<dbReference type="InterPro" id="IPR055130">
    <property type="entry name" value="PreP_C"/>
</dbReference>
<dbReference type="PANTHER" id="PTHR43016">
    <property type="entry name" value="PRESEQUENCE PROTEASE"/>
    <property type="match status" value="1"/>
</dbReference>
<dbReference type="PANTHER" id="PTHR43016:SF13">
    <property type="entry name" value="PRESEQUENCE PROTEASE, MITOCHONDRIAL"/>
    <property type="match status" value="1"/>
</dbReference>
<dbReference type="Pfam" id="PF08367">
    <property type="entry name" value="M16C_assoc"/>
    <property type="match status" value="1"/>
</dbReference>
<dbReference type="Pfam" id="PF00675">
    <property type="entry name" value="Peptidase_M16"/>
    <property type="match status" value="1"/>
</dbReference>
<dbReference type="Pfam" id="PF05193">
    <property type="entry name" value="Peptidase_M16_C"/>
    <property type="match status" value="1"/>
</dbReference>
<dbReference type="Pfam" id="PF22516">
    <property type="entry name" value="PreP_C"/>
    <property type="match status" value="1"/>
</dbReference>
<dbReference type="SMART" id="SM01264">
    <property type="entry name" value="M16C_associated"/>
    <property type="match status" value="1"/>
</dbReference>
<dbReference type="SUPFAM" id="SSF63411">
    <property type="entry name" value="LuxS/MPP-like metallohydrolase"/>
    <property type="match status" value="4"/>
</dbReference>
<accession>Q46205</accession>
<protein>
    <recommendedName>
        <fullName>Protein HypA</fullName>
    </recommendedName>
</protein>
<sequence>MNFKENNIYSGFKLLNIENLNEIGGVGLRFEHEKTKAKLIKILSEDDNKCFAIGFRTPPENSTGVPHILEHSVLCGSRKFNTKEPFVELLKGSLNTFLNAMTYPDKTIYPVASRNEKDFMNLMDVYLDAVLYPNIYKHKEIFMQEGWHYYIENKEDELKYNGVVYNEMKGAYSSPDSILYRKIPQTIYPDTCYALSSGGDPDEIPNLTYEEFVEFHKKYYHPSNSYIFLYGNGDTEKELEFINEEYLKNFEYKEIDSEIKEQKSFESMKEESFTYGIAESEDLNHKSYYSLNFVIGDATDGEKGLAFDVLAYLLTRSTAAPLKKALIDAGIGKAVSGDFDNSTKQSAFTVLVKNAELNKEEEFKKVVMDTLKDLVENGIDKELIEASINRVEFELREGDYGSYPNGLIYYLKVMDSWLYDGDPYVHLEYEKNLEKIKSALTSNYFEDLIERYMINNTHSSLVSLHPEKGINEKKSAELKKKLEEIKNSFDEKTLNEIIDNCKKLKERQSTPDKKEDLESIPMLSLEDIDKEATKIPTEEKEIDGITTLHHDFHTNKIDYVNFFFNTNSVPEDLIPYVGLLCDILGKCGTENYDYSKLSNAINISTGGISFGAITFANLKKNNEFRPYLEISYKALSSKTNKAIELVDEIVNHTDLDDMDRIMQIIREKRARLEGAIFDSGHRIAMKKVLSYSTNRGAYDEKISGLDYYDFLVNIEKEDKKSTISDSLKKVRDLIFNKGNMLISYSGKEEEYENFKEKVKYLISKTNNNDFEKEEYNFELGKKNEGLLTQGNVQYVAKGGNYKTHGYKYSGALSLLESILGFDYLWNAVRVKGGAYGVFSNFRRDGGAYIVSYRDPNIKSTLEAYDNIPKYLNDFEADEREMTKYIIGTIRKYDQPISNGIKGDIAVSYYLSNFTYEDLQKEREEIINADVEKIKSFAPMIKDLMKEDYICVLGNEEKIKENKDLFNNIKSVIK</sequence>
<reference key="1">
    <citation type="journal article" date="2002" name="Proc. Natl. Acad. Sci. U.S.A.">
        <title>Complete genome sequence of Clostridium perfringens, an anaerobic flesh-eater.</title>
        <authorList>
            <person name="Shimizu T."/>
            <person name="Ohtani K."/>
            <person name="Hirakawa H."/>
            <person name="Ohshima K."/>
            <person name="Yamashita A."/>
            <person name="Shiba T."/>
            <person name="Ogasawara N."/>
            <person name="Hattori M."/>
            <person name="Kuhara S."/>
            <person name="Hayashi H."/>
        </authorList>
    </citation>
    <scope>NUCLEOTIDE SEQUENCE [LARGE SCALE GENOMIC DNA]</scope>
    <source>
        <strain>13 / Type A</strain>
    </source>
</reference>
<reference key="2">
    <citation type="journal article" date="1995" name="J. Bacteriol.">
        <title>Rapid expansion of the physical and genetic map of the chromosome of Clostridium perfringens CPN50.</title>
        <authorList>
            <person name="Katayama S."/>
            <person name="Dupuy B."/>
            <person name="Garnier T."/>
            <person name="Cole S.T."/>
        </authorList>
    </citation>
    <scope>NUCLEOTIDE SEQUENCE [GENOMIC DNA] OF 34-181</scope>
    <source>
        <strain>CPN50</strain>
    </source>
</reference>
<gene>
    <name type="primary">hypA</name>
    <name type="ordered locus">CPE1402</name>
</gene>
<organism>
    <name type="scientific">Clostridium perfringens (strain 13 / Type A)</name>
    <dbReference type="NCBI Taxonomy" id="195102"/>
    <lineage>
        <taxon>Bacteria</taxon>
        <taxon>Bacillati</taxon>
        <taxon>Bacillota</taxon>
        <taxon>Clostridia</taxon>
        <taxon>Eubacteriales</taxon>
        <taxon>Clostridiaceae</taxon>
        <taxon>Clostridium</taxon>
    </lineage>
</organism>
<name>HYPA_CLOPE</name>
<proteinExistence type="predicted"/>
<feature type="chain" id="PRO_0000178016" description="Protein HypA">
    <location>
        <begin position="1"/>
        <end position="973"/>
    </location>
</feature>